<accession>Q5REE6</accession>
<reference key="1">
    <citation type="submission" date="2004-11" db="EMBL/GenBank/DDBJ databases">
        <authorList>
            <consortium name="The German cDNA consortium"/>
        </authorList>
    </citation>
    <scope>NUCLEOTIDE SEQUENCE [LARGE SCALE MRNA]</scope>
    <source>
        <tissue>Brain cortex</tissue>
    </source>
</reference>
<sequence length="423" mass="47708">MAQLQTRFYTDNKKYAIDDVPFSIPAASEIADLSNIINKLLKDKNEFHKHVEFDFLIKGQFLRMPLDKHMEMENISSEEVVEIEYVEKYTAPQPEQCMFHDDWISSIKGAEEWILTGSYDKTSRIWSLEGKSIMTIVGHTDVVKDVAWVKKDSLSCLLLSASMDQTILLWEWNVERNKVKALHCCRGHAGSVDSIAVDGSGTKFCSGSWDKMLKIWSTVPTDEEDEMEESTNRPRKKQKTEQLGLTRTPVVTLSGHMEAVSSVLWSDAEEICSASWDHTIRVWDVESGSLKSTLTGNKVFNCISYSPLCKRLASGSTDRHIRLWDPRTKDGSLVSLSLTSHTGWVTSVKWSPTHEQQLISGSLDNIVKLWDTRSCKAPLYDLAAHEDKVLSVDWTDTGLLLSGGADNKLYSYRYSPTTSHVGA</sequence>
<organism>
    <name type="scientific">Pongo abelii</name>
    <name type="common">Sumatran orangutan</name>
    <name type="synonym">Pongo pygmaeus abelii</name>
    <dbReference type="NCBI Taxonomy" id="9601"/>
    <lineage>
        <taxon>Eukaryota</taxon>
        <taxon>Metazoa</taxon>
        <taxon>Chordata</taxon>
        <taxon>Craniata</taxon>
        <taxon>Vertebrata</taxon>
        <taxon>Euteleostomi</taxon>
        <taxon>Mammalia</taxon>
        <taxon>Eutheria</taxon>
        <taxon>Euarchontoglires</taxon>
        <taxon>Primates</taxon>
        <taxon>Haplorrhini</taxon>
        <taxon>Catarrhini</taxon>
        <taxon>Hominidae</taxon>
        <taxon>Pongo</taxon>
    </lineage>
</organism>
<gene>
    <name evidence="3" type="primary">WDR12</name>
</gene>
<dbReference type="EMBL" id="CR857583">
    <property type="protein sequence ID" value="CAH89861.1"/>
    <property type="molecule type" value="mRNA"/>
</dbReference>
<dbReference type="RefSeq" id="NP_001124867.1">
    <property type="nucleotide sequence ID" value="NM_001131395.1"/>
</dbReference>
<dbReference type="RefSeq" id="XP_009236273.1">
    <property type="nucleotide sequence ID" value="XM_009237998.1"/>
</dbReference>
<dbReference type="SMR" id="Q5REE6"/>
<dbReference type="FunCoup" id="Q5REE6">
    <property type="interactions" value="1925"/>
</dbReference>
<dbReference type="STRING" id="9601.ENSPPYP00000014627"/>
<dbReference type="Ensembl" id="ENSPPYT00000051442.1">
    <property type="protein sequence ID" value="ENSPPYP00000042103.1"/>
    <property type="gene ID" value="ENSPPYG00000040830.1"/>
</dbReference>
<dbReference type="GeneID" id="100171729"/>
<dbReference type="KEGG" id="pon:100171729"/>
<dbReference type="CTD" id="55759"/>
<dbReference type="eggNOG" id="KOG0313">
    <property type="taxonomic scope" value="Eukaryota"/>
</dbReference>
<dbReference type="GeneTree" id="ENSGT00930000150950"/>
<dbReference type="HOGENOM" id="CLU_000288_57_0_1"/>
<dbReference type="InParanoid" id="Q5REE6"/>
<dbReference type="OrthoDB" id="10251381at2759"/>
<dbReference type="TreeFam" id="TF313023"/>
<dbReference type="Proteomes" id="UP000001595">
    <property type="component" value="Chromosome 2B"/>
</dbReference>
<dbReference type="GO" id="GO:0005730">
    <property type="term" value="C:nucleolus"/>
    <property type="evidence" value="ECO:0000250"/>
    <property type="project" value="UniProtKB"/>
</dbReference>
<dbReference type="GO" id="GO:0005654">
    <property type="term" value="C:nucleoplasm"/>
    <property type="evidence" value="ECO:0000250"/>
    <property type="project" value="UniProtKB"/>
</dbReference>
<dbReference type="GO" id="GO:0070545">
    <property type="term" value="C:PeBoW complex"/>
    <property type="evidence" value="ECO:0000250"/>
    <property type="project" value="UniProtKB"/>
</dbReference>
<dbReference type="GO" id="GO:0030687">
    <property type="term" value="C:preribosome, large subunit precursor"/>
    <property type="evidence" value="ECO:0000250"/>
    <property type="project" value="UniProtKB"/>
</dbReference>
<dbReference type="GO" id="GO:0043021">
    <property type="term" value="F:ribonucleoprotein complex binding"/>
    <property type="evidence" value="ECO:0007669"/>
    <property type="project" value="UniProtKB-UniRule"/>
</dbReference>
<dbReference type="GO" id="GO:0000466">
    <property type="term" value="P:maturation of 5.8S rRNA from tricistronic rRNA transcript (SSU-rRNA, 5.8S rRNA, LSU-rRNA)"/>
    <property type="evidence" value="ECO:0000250"/>
    <property type="project" value="UniProtKB"/>
</dbReference>
<dbReference type="GO" id="GO:0000463">
    <property type="term" value="P:maturation of LSU-rRNA from tricistronic rRNA transcript (SSU-rRNA, 5.8S rRNA, LSU-rRNA)"/>
    <property type="evidence" value="ECO:0000250"/>
    <property type="project" value="UniProtKB"/>
</dbReference>
<dbReference type="GO" id="GO:0051726">
    <property type="term" value="P:regulation of cell cycle"/>
    <property type="evidence" value="ECO:0000250"/>
    <property type="project" value="UniProtKB"/>
</dbReference>
<dbReference type="CDD" id="cd00200">
    <property type="entry name" value="WD40"/>
    <property type="match status" value="1"/>
</dbReference>
<dbReference type="FunFam" id="2.130.10.10:FF:000272">
    <property type="entry name" value="Ribosome biogenesis protein WDR12"/>
    <property type="match status" value="1"/>
</dbReference>
<dbReference type="Gene3D" id="2.130.10.10">
    <property type="entry name" value="YVTN repeat-like/Quinoprotein amine dehydrogenase"/>
    <property type="match status" value="1"/>
</dbReference>
<dbReference type="HAMAP" id="MF_03029">
    <property type="entry name" value="WDR12"/>
    <property type="match status" value="1"/>
</dbReference>
<dbReference type="InterPro" id="IPR020472">
    <property type="entry name" value="G-protein_beta_WD-40_rep"/>
</dbReference>
<dbReference type="InterPro" id="IPR012972">
    <property type="entry name" value="NLE"/>
</dbReference>
<dbReference type="InterPro" id="IPR015943">
    <property type="entry name" value="WD40/YVTN_repeat-like_dom_sf"/>
</dbReference>
<dbReference type="InterPro" id="IPR019775">
    <property type="entry name" value="WD40_repeat_CS"/>
</dbReference>
<dbReference type="InterPro" id="IPR036322">
    <property type="entry name" value="WD40_repeat_dom_sf"/>
</dbReference>
<dbReference type="InterPro" id="IPR001680">
    <property type="entry name" value="WD40_rpt"/>
</dbReference>
<dbReference type="InterPro" id="IPR028599">
    <property type="entry name" value="WDR12/Ytm1"/>
</dbReference>
<dbReference type="PANTHER" id="PTHR19855:SF11">
    <property type="entry name" value="RIBOSOME BIOGENESIS PROTEIN WDR12"/>
    <property type="match status" value="1"/>
</dbReference>
<dbReference type="PANTHER" id="PTHR19855">
    <property type="entry name" value="WD40 REPEAT PROTEIN 12, 37"/>
    <property type="match status" value="1"/>
</dbReference>
<dbReference type="Pfam" id="PF08154">
    <property type="entry name" value="NLE"/>
    <property type="match status" value="1"/>
</dbReference>
<dbReference type="Pfam" id="PF00400">
    <property type="entry name" value="WD40"/>
    <property type="match status" value="7"/>
</dbReference>
<dbReference type="PRINTS" id="PR00320">
    <property type="entry name" value="GPROTEINBRPT"/>
</dbReference>
<dbReference type="SMART" id="SM00320">
    <property type="entry name" value="WD40"/>
    <property type="match status" value="7"/>
</dbReference>
<dbReference type="SUPFAM" id="SSF50978">
    <property type="entry name" value="WD40 repeat-like"/>
    <property type="match status" value="1"/>
</dbReference>
<dbReference type="PROSITE" id="PS00678">
    <property type="entry name" value="WD_REPEATS_1"/>
    <property type="match status" value="2"/>
</dbReference>
<dbReference type="PROSITE" id="PS50082">
    <property type="entry name" value="WD_REPEATS_2"/>
    <property type="match status" value="5"/>
</dbReference>
<dbReference type="PROSITE" id="PS50294">
    <property type="entry name" value="WD_REPEATS_REGION"/>
    <property type="match status" value="1"/>
</dbReference>
<comment type="function">
    <text evidence="3">Component of the PeBoW complex, which is required for maturation of 28S and 5.8S ribosomal RNAs and formation of the 60S ribosome.</text>
</comment>
<comment type="subunit">
    <text evidence="3">Component of the PeBoW complex, composed of BOP1, PES1 and WDR12. The complex is held together by BOP1, which interacts with PES1 via its N-terminal domain and with WDR12 via a high-affinity interaction between the seven-bladed beta-propeller domains of the 2 proteins. The PeBoW complex associates with the 66S pre-ribosome. Interacts (via UBL domain) with MDN1 (via VWFA/MIDAS domain).</text>
</comment>
<comment type="subcellular location">
    <subcellularLocation>
        <location evidence="3">Nucleus</location>
        <location evidence="3">Nucleolus</location>
    </subcellularLocation>
    <subcellularLocation>
        <location evidence="3">Nucleus</location>
        <location evidence="3">Nucleoplasm</location>
    </subcellularLocation>
</comment>
<comment type="similarity">
    <text evidence="3">Belongs to the WD repeat WDR12/YTM1 family.</text>
</comment>
<feature type="initiator methionine" description="Removed" evidence="2">
    <location>
        <position position="1"/>
    </location>
</feature>
<feature type="chain" id="PRO_0000354080" description="Ribosome biogenesis protein WDR12">
    <location>
        <begin position="2"/>
        <end position="423"/>
    </location>
</feature>
<feature type="repeat" description="WD 1">
    <location>
        <begin position="99"/>
        <end position="137"/>
    </location>
</feature>
<feature type="repeat" description="WD 2">
    <location>
        <begin position="138"/>
        <end position="180"/>
    </location>
</feature>
<feature type="repeat" description="WD 3">
    <location>
        <begin position="187"/>
        <end position="226"/>
    </location>
</feature>
<feature type="repeat" description="WD 4">
    <location>
        <begin position="255"/>
        <end position="293"/>
    </location>
</feature>
<feature type="repeat" description="WD 5">
    <location>
        <begin position="295"/>
        <end position="334"/>
    </location>
</feature>
<feature type="repeat" description="WD 6">
    <location>
        <begin position="340"/>
        <end position="380"/>
    </location>
</feature>
<feature type="repeat" description="WD 7">
    <location>
        <begin position="384"/>
        <end position="422"/>
    </location>
</feature>
<feature type="region of interest" description="Ubiquitin-like (UBL) domain" evidence="3">
    <location>
        <begin position="4"/>
        <end position="87"/>
    </location>
</feature>
<feature type="region of interest" description="Sufficient for nucleolar localization" evidence="1">
    <location>
        <begin position="98"/>
        <end position="423"/>
    </location>
</feature>
<feature type="region of interest" description="Disordered" evidence="4">
    <location>
        <begin position="220"/>
        <end position="242"/>
    </location>
</feature>
<feature type="modified residue" description="N-acetylalanine" evidence="2">
    <location>
        <position position="2"/>
    </location>
</feature>
<feature type="modified residue" description="Phosphoserine" evidence="2">
    <location>
        <position position="415"/>
    </location>
</feature>
<feature type="cross-link" description="Glycyl lysine isopeptide (Lys-Gly) (interchain with G-Cter in SUMO1)" evidence="2">
    <location>
        <position position="239"/>
    </location>
</feature>
<name>WDR12_PONAB</name>
<evidence type="ECO:0000250" key="1"/>
<evidence type="ECO:0000250" key="2">
    <source>
        <dbReference type="UniProtKB" id="Q9GZL7"/>
    </source>
</evidence>
<evidence type="ECO:0000255" key="3">
    <source>
        <dbReference type="HAMAP-Rule" id="MF_03029"/>
    </source>
</evidence>
<evidence type="ECO:0000256" key="4">
    <source>
        <dbReference type="SAM" id="MobiDB-lite"/>
    </source>
</evidence>
<proteinExistence type="evidence at transcript level"/>
<protein>
    <recommendedName>
        <fullName evidence="3">Ribosome biogenesis protein WDR12</fullName>
    </recommendedName>
    <alternativeName>
        <fullName evidence="3">WD repeat-containing protein 12</fullName>
    </alternativeName>
</protein>
<keyword id="KW-0007">Acetylation</keyword>
<keyword id="KW-1017">Isopeptide bond</keyword>
<keyword id="KW-0539">Nucleus</keyword>
<keyword id="KW-0597">Phosphoprotein</keyword>
<keyword id="KW-1185">Reference proteome</keyword>
<keyword id="KW-0677">Repeat</keyword>
<keyword id="KW-0690">Ribosome biogenesis</keyword>
<keyword id="KW-0698">rRNA processing</keyword>
<keyword id="KW-0832">Ubl conjugation</keyword>
<keyword id="KW-0853">WD repeat</keyword>